<feature type="signal peptide" evidence="5">
    <location>
        <begin position="1"/>
        <end position="35"/>
    </location>
</feature>
<feature type="chain" id="PRO_0000442296" description="Dermonecrotic toxin Hl-PLD1" evidence="9 10">
    <location>
        <begin position="36"/>
        <end position="324"/>
    </location>
</feature>
<feature type="active site" evidence="4">
    <location>
        <position position="50"/>
    </location>
</feature>
<feature type="active site" description="Nucleophile" evidence="4">
    <location>
        <position position="86"/>
    </location>
</feature>
<feature type="binding site" evidence="4">
    <location>
        <position position="70"/>
    </location>
    <ligand>
        <name>Mg(2+)</name>
        <dbReference type="ChEBI" id="CHEBI:18420"/>
    </ligand>
</feature>
<feature type="binding site" evidence="4">
    <location>
        <position position="72"/>
    </location>
    <ligand>
        <name>Mg(2+)</name>
        <dbReference type="ChEBI" id="CHEBI:18420"/>
    </ligand>
</feature>
<feature type="binding site" evidence="4">
    <location>
        <position position="130"/>
    </location>
    <ligand>
        <name>Mg(2+)</name>
        <dbReference type="ChEBI" id="CHEBI:18420"/>
    </ligand>
</feature>
<feature type="disulfide bond" evidence="4">
    <location>
        <begin position="90"/>
        <end position="96"/>
    </location>
</feature>
<feature type="disulfide bond" evidence="8">
    <location>
        <begin position="92"/>
        <end position="236"/>
    </location>
</feature>
<keyword id="KW-0204">Cytolysis</keyword>
<keyword id="KW-1061">Dermonecrotic toxin</keyword>
<keyword id="KW-1015">Disulfide bond</keyword>
<keyword id="KW-0354">Hemolysis</keyword>
<keyword id="KW-0442">Lipid degradation</keyword>
<keyword id="KW-0443">Lipid metabolism</keyword>
<keyword id="KW-0456">Lyase</keyword>
<keyword id="KW-0460">Magnesium</keyword>
<keyword id="KW-0479">Metal-binding</keyword>
<keyword id="KW-0964">Secreted</keyword>
<keyword id="KW-0732">Signal</keyword>
<keyword id="KW-0800">Toxin</keyword>
<keyword id="KW-0865">Zymogen</keyword>
<accession>A0A1L4BJ98</accession>
<evidence type="ECO:0000250" key="1">
    <source>
        <dbReference type="UniProtKB" id="A0A0D4WTV1"/>
    </source>
</evidence>
<evidence type="ECO:0000250" key="2">
    <source>
        <dbReference type="UniProtKB" id="A0A0D4WV12"/>
    </source>
</evidence>
<evidence type="ECO:0000250" key="3">
    <source>
        <dbReference type="UniProtKB" id="Q4ZFU2"/>
    </source>
</evidence>
<evidence type="ECO:0000250" key="4">
    <source>
        <dbReference type="UniProtKB" id="Q8I914"/>
    </source>
</evidence>
<evidence type="ECO:0000255" key="5"/>
<evidence type="ECO:0000269" key="6">
    <source>
    </source>
</evidence>
<evidence type="ECO:0000303" key="7">
    <source>
    </source>
</evidence>
<evidence type="ECO:0000305" key="8"/>
<evidence type="ECO:0000305" key="9">
    <source>
    </source>
</evidence>
<evidence type="ECO:0000305" key="10">
    <source>
    </source>
</evidence>
<proteinExistence type="evidence at protein level"/>
<dbReference type="EC" id="4.6.1.-" evidence="3"/>
<dbReference type="EMBL" id="KX932445">
    <property type="protein sequence ID" value="API81378.1"/>
    <property type="molecule type" value="mRNA"/>
</dbReference>
<dbReference type="EMBL" id="KY287766">
    <property type="protein sequence ID" value="AQZ26451.1"/>
    <property type="molecule type" value="Other_DNA"/>
</dbReference>
<dbReference type="SMR" id="A0A1L4BJ98"/>
<dbReference type="BRENDA" id="3.1.4.41">
    <property type="organism ID" value="13861"/>
</dbReference>
<dbReference type="GO" id="GO:0005576">
    <property type="term" value="C:extracellular region"/>
    <property type="evidence" value="ECO:0007669"/>
    <property type="project" value="UniProtKB-SubCell"/>
</dbReference>
<dbReference type="GO" id="GO:0016829">
    <property type="term" value="F:lyase activity"/>
    <property type="evidence" value="ECO:0007669"/>
    <property type="project" value="UniProtKB-KW"/>
</dbReference>
<dbReference type="GO" id="GO:0046872">
    <property type="term" value="F:metal ion binding"/>
    <property type="evidence" value="ECO:0007669"/>
    <property type="project" value="UniProtKB-KW"/>
</dbReference>
<dbReference type="GO" id="GO:0008081">
    <property type="term" value="F:phosphoric diester hydrolase activity"/>
    <property type="evidence" value="ECO:0007669"/>
    <property type="project" value="InterPro"/>
</dbReference>
<dbReference type="GO" id="GO:0090729">
    <property type="term" value="F:toxin activity"/>
    <property type="evidence" value="ECO:0007669"/>
    <property type="project" value="UniProtKB-KW"/>
</dbReference>
<dbReference type="GO" id="GO:0031640">
    <property type="term" value="P:killing of cells of another organism"/>
    <property type="evidence" value="ECO:0007669"/>
    <property type="project" value="UniProtKB-KW"/>
</dbReference>
<dbReference type="GO" id="GO:0016042">
    <property type="term" value="P:lipid catabolic process"/>
    <property type="evidence" value="ECO:0007669"/>
    <property type="project" value="UniProtKB-KW"/>
</dbReference>
<dbReference type="CDD" id="cd08576">
    <property type="entry name" value="GDPD_like_SMaseD_PLD"/>
    <property type="match status" value="1"/>
</dbReference>
<dbReference type="Gene3D" id="3.20.20.190">
    <property type="entry name" value="Phosphatidylinositol (PI) phosphodiesterase"/>
    <property type="match status" value="1"/>
</dbReference>
<dbReference type="InterPro" id="IPR017946">
    <property type="entry name" value="PLC-like_Pdiesterase_TIM-brl"/>
</dbReference>
<dbReference type="Pfam" id="PF13653">
    <property type="entry name" value="GDPD_2"/>
    <property type="match status" value="1"/>
</dbReference>
<dbReference type="SUPFAM" id="SSF51695">
    <property type="entry name" value="PLC-like phosphodiesterases"/>
    <property type="match status" value="1"/>
</dbReference>
<comment type="function">
    <text evidence="1 6">Dermonecrotic toxins cleave the phosphodiester linkage between the phosphate and headgroup of certain phospholipids (sphingolipid and lysolipid substrates), forming an alcohol (often choline) and a cyclic phosphate (By similarity). This toxin acts on sphingomyelin (SM) with a high activity (PubMed:28335389). It may also act on ceramide phosphoethanolamine (CPE), lysophosphatidylcholine (LPC) and lysophosphatidylethanolamine (LPE), but not on lysophosphatidylserine (LPS), and lysophosphatidylglycerol (LPG) (By similarity). It acts by transphosphatidylation, releasing exclusively cyclic phosphate products as second products (By similarity). In vivo, shows dermonecrotic activity when intradermally injected into rabbit skin and is lethal to mice (PubMed:28335389). Induces increased vascular permeability, edema, inflammatory response, and platelet aggregation (By similarity). Does not show hemolytic activity (at up to 50 ug) (PubMed:28335389).</text>
</comment>
<comment type="catalytic activity">
    <reaction evidence="10">
        <text>an N-(acyl)-sphingosylphosphocholine = an N-(acyl)-sphingosyl-1,3-cyclic phosphate + choline</text>
        <dbReference type="Rhea" id="RHEA:60652"/>
        <dbReference type="ChEBI" id="CHEBI:15354"/>
        <dbReference type="ChEBI" id="CHEBI:64583"/>
        <dbReference type="ChEBI" id="CHEBI:143892"/>
    </reaction>
</comment>
<comment type="catalytic activity">
    <reaction evidence="1">
        <text>an N-(acyl)-sphingosylphosphoethanolamine = an N-(acyl)-sphingosyl-1,3-cyclic phosphate + ethanolamine</text>
        <dbReference type="Rhea" id="RHEA:60648"/>
        <dbReference type="ChEBI" id="CHEBI:57603"/>
        <dbReference type="ChEBI" id="CHEBI:143891"/>
        <dbReference type="ChEBI" id="CHEBI:143892"/>
    </reaction>
</comment>
<comment type="catalytic activity">
    <reaction evidence="1">
        <text>a 1-acyl-sn-glycero-3-phosphocholine = a 1-acyl-sn-glycero-2,3-cyclic phosphate + choline</text>
        <dbReference type="Rhea" id="RHEA:60700"/>
        <dbReference type="ChEBI" id="CHEBI:15354"/>
        <dbReference type="ChEBI" id="CHEBI:58168"/>
        <dbReference type="ChEBI" id="CHEBI:143947"/>
    </reaction>
</comment>
<comment type="catalytic activity">
    <reaction evidence="1">
        <text>a 1-acyl-sn-glycero-3-phosphoethanolamine = a 1-acyl-sn-glycero-2,3-cyclic phosphate + ethanolamine</text>
        <dbReference type="Rhea" id="RHEA:60704"/>
        <dbReference type="ChEBI" id="CHEBI:57603"/>
        <dbReference type="ChEBI" id="CHEBI:64381"/>
        <dbReference type="ChEBI" id="CHEBI:143947"/>
    </reaction>
</comment>
<comment type="cofactor">
    <cofactor evidence="10">
        <name>Mg(2+)</name>
        <dbReference type="ChEBI" id="CHEBI:18420"/>
    </cofactor>
    <text evidence="4">Binds 1 Mg(2+) ion per subunit.</text>
</comment>
<comment type="subcellular location">
    <subcellularLocation>
        <location evidence="10">Secreted</location>
    </subcellularLocation>
</comment>
<comment type="tissue specificity">
    <text evidence="10">Expressed by the venom gland.</text>
</comment>
<comment type="toxic dose">
    <text evidence="6">LD(50) is 3.1 ug/mouse and LD(100) is 3.7 ug/mouse by intraperitoneal injection into mice.</text>
</comment>
<comment type="similarity">
    <text evidence="8">Belongs to the arthropod phospholipase D family. Class II subfamily.</text>
</comment>
<comment type="caution">
    <text evidence="1 2 3">The most common activity assay for dermonecrotic toxins detects enzymatic activity by monitoring choline release from substrate. Liberation of choline from sphingomyelin (SM) or lysophosphatidylcholine (LPC) is commonly assumed to result from substrate hydrolysis, giving either ceramide-1-phosphate (C1P) or lysophosphatidic acid (LPA), respectively, as a second product. However, two studies from Lajoie and colleagues (2013 and 2015) report the observation of exclusive formation of cyclic phosphate products as second products, resulting from intramolecular transphosphatidylation. Cyclic phosphates have vastly different biological properties from their monoester counterparts, and they may be relevant to the pathology of brown spider envenomation.</text>
</comment>
<protein>
    <recommendedName>
        <fullName evidence="7">Dermonecrotic toxin Hl-PLD1</fullName>
        <ecNumber evidence="3">4.6.1.-</ecNumber>
    </recommendedName>
    <alternativeName>
        <fullName>Phospholipase D</fullName>
        <shortName>PLD</shortName>
    </alternativeName>
    <alternativeName>
        <fullName>Sphingomyelin phosphodiesterase D</fullName>
        <shortName>SMD</shortName>
        <shortName>SMase D</shortName>
        <shortName>Sphingomyelinase D</shortName>
    </alternativeName>
</protein>
<sequence length="324" mass="36979">MAHCYYNSKRGCNRVMKTVALVVLISTVMVEESRGDSQEDKKRPIWNIGHMVNAVKQIEEFLDLGANALEADVTFDDNGNPKWTYHGTPCDCFRDCLRWEYVDEYLKRIRELTSPGSSKFRKGFILLMLDLKISKLSDNAKSKAGKEIADMIIKRLWSGSGEKAQLYIVLSFPYVNDIEFVRAFRERVKSKGFASEAEKRIGWDISGNEDLGKIRDAYQKLGITDNVWQSDGITNCLTRSHDRLAEAVCKRDSDKEWPSLKKVYYWTVDKQSSMKEALKVGVDGMITNDPDDLVAVLNEFSGTHRLANINDSPWQKIPRPKSNC</sequence>
<organism>
    <name type="scientific">Hemiscorpius lepturus</name>
    <name type="common">Scorpion</name>
    <dbReference type="NCBI Taxonomy" id="520031"/>
    <lineage>
        <taxon>Eukaryota</taxon>
        <taxon>Metazoa</taxon>
        <taxon>Ecdysozoa</taxon>
        <taxon>Arthropoda</taxon>
        <taxon>Chelicerata</taxon>
        <taxon>Arachnida</taxon>
        <taxon>Scorpiones</taxon>
        <taxon>Iurida</taxon>
        <taxon>Scorpionoidea</taxon>
        <taxon>Hemiscorpiidae</taxon>
    </lineage>
</organism>
<name>DTPLD_HEMLE</name>
<reference key="1">
    <citation type="journal article" date="2016" name="Toxicon">
        <title>The first report on transcriptome analysis of the venom gland of Iranian scorpion, Hemiscorpius lepturus.</title>
        <authorList>
            <person name="Kazemi-Lomedasht F."/>
            <person name="Khalaj V."/>
            <person name="Bagheri K.P."/>
            <person name="Behdani M."/>
            <person name="Shahbazzadeh D."/>
        </authorList>
    </citation>
    <scope>NUCLEOTIDE SEQUENCE [MRNA]</scope>
    <source>
        <tissue>Venom gland</tissue>
    </source>
</reference>
<reference key="2">
    <citation type="journal article" date="2017" name="Toxicon">
        <title>Corrigendum to 'The first report on transcriptome analysis of the venom gland of Iranian scorpion, Hemiscorpius lepturus' [Toxicon 125 (2017) 123-130].</title>
        <authorList>
            <person name="Torabi E."/>
            <person name="Asgari S."/>
            <person name="Khalaj V."/>
            <person name="Behdani M."/>
            <person name="Kazemi-Lomedasht F."/>
            <person name="Bagheri K.P."/>
            <person name="Shahbazzadeh D."/>
        </authorList>
    </citation>
    <scope>ERRATUM OF PUBMED:27914888</scope>
</reference>
<reference key="3">
    <citation type="journal article" date="2017" name="Toxins">
        <title>Characteristics and lethality of a novel recombinant dermonecrotic venom phospholipase D from Hemiscorpius lepturus.</title>
        <authorList>
            <person name="Torabi E."/>
            <person name="Behdani M."/>
            <person name="Chafi M.H."/>
            <person name="Moazzami R."/>
            <person name="Sabatier J.M."/>
            <person name="Khalaj V."/>
            <person name="Shahbazzadeh D."/>
            <person name="Bagheri K.P."/>
        </authorList>
    </citation>
    <scope>NUCLEOTIDE SEQUENCE [MRNA]</scope>
    <scope>FUNCTION</scope>
    <scope>BIOASSAY</scope>
    <scope>TOXIC DOSE</scope>
    <scope>CATALYTIC ACTIVITY</scope>
    <scope>COFACTOR</scope>
    <scope>3D-STRUCTURE MODELING</scope>
</reference>